<protein>
    <recommendedName>
        <fullName evidence="1">Iron-binding protein IscA</fullName>
    </recommendedName>
    <alternativeName>
        <fullName evidence="1">Iron-sulfur cluster assembly protein</fullName>
    </alternativeName>
</protein>
<evidence type="ECO:0000255" key="1">
    <source>
        <dbReference type="HAMAP-Rule" id="MF_01429"/>
    </source>
</evidence>
<keyword id="KW-0408">Iron</keyword>
<keyword id="KW-0479">Metal-binding</keyword>
<dbReference type="EMBL" id="AM933172">
    <property type="protein sequence ID" value="CAR34104.1"/>
    <property type="molecule type" value="Genomic_DNA"/>
</dbReference>
<dbReference type="RefSeq" id="WP_000028952.1">
    <property type="nucleotide sequence ID" value="NC_011294.1"/>
</dbReference>
<dbReference type="SMR" id="B5R5A0"/>
<dbReference type="GeneID" id="66756972"/>
<dbReference type="KEGG" id="set:SEN2521"/>
<dbReference type="HOGENOM" id="CLU_069054_5_1_6"/>
<dbReference type="Proteomes" id="UP000000613">
    <property type="component" value="Chromosome"/>
</dbReference>
<dbReference type="GO" id="GO:0005829">
    <property type="term" value="C:cytosol"/>
    <property type="evidence" value="ECO:0007669"/>
    <property type="project" value="TreeGrafter"/>
</dbReference>
<dbReference type="GO" id="GO:0051537">
    <property type="term" value="F:2 iron, 2 sulfur cluster binding"/>
    <property type="evidence" value="ECO:0007669"/>
    <property type="project" value="TreeGrafter"/>
</dbReference>
<dbReference type="GO" id="GO:0005506">
    <property type="term" value="F:iron ion binding"/>
    <property type="evidence" value="ECO:0007669"/>
    <property type="project" value="UniProtKB-UniRule"/>
</dbReference>
<dbReference type="GO" id="GO:0016226">
    <property type="term" value="P:iron-sulfur cluster assembly"/>
    <property type="evidence" value="ECO:0007669"/>
    <property type="project" value="UniProtKB-UniRule"/>
</dbReference>
<dbReference type="FunFam" id="2.60.300.12:FF:000001">
    <property type="entry name" value="Iron-binding protein IscA"/>
    <property type="match status" value="1"/>
</dbReference>
<dbReference type="Gene3D" id="2.60.300.12">
    <property type="entry name" value="HesB-like domain"/>
    <property type="match status" value="1"/>
</dbReference>
<dbReference type="HAMAP" id="MF_01429">
    <property type="entry name" value="Fe_S_insert_IscA"/>
    <property type="match status" value="1"/>
</dbReference>
<dbReference type="InterPro" id="IPR050322">
    <property type="entry name" value="Fe-S_cluster_asmbl/transfer"/>
</dbReference>
<dbReference type="InterPro" id="IPR000361">
    <property type="entry name" value="FeS_biogenesis"/>
</dbReference>
<dbReference type="InterPro" id="IPR016092">
    <property type="entry name" value="FeS_cluster_insertion"/>
</dbReference>
<dbReference type="InterPro" id="IPR017870">
    <property type="entry name" value="FeS_cluster_insertion_CS"/>
</dbReference>
<dbReference type="InterPro" id="IPR035903">
    <property type="entry name" value="HesB-like_dom_sf"/>
</dbReference>
<dbReference type="InterPro" id="IPR011302">
    <property type="entry name" value="IscA_proteobacteria"/>
</dbReference>
<dbReference type="NCBIfam" id="TIGR00049">
    <property type="entry name" value="iron-sulfur cluster assembly accessory protein"/>
    <property type="match status" value="1"/>
</dbReference>
<dbReference type="NCBIfam" id="TIGR02011">
    <property type="entry name" value="IscA"/>
    <property type="match status" value="1"/>
</dbReference>
<dbReference type="NCBIfam" id="NF007049">
    <property type="entry name" value="PRK09502.1"/>
    <property type="match status" value="1"/>
</dbReference>
<dbReference type="PANTHER" id="PTHR10072:SF41">
    <property type="entry name" value="IRON-SULFUR CLUSTER ASSEMBLY 1 HOMOLOG, MITOCHONDRIAL"/>
    <property type="match status" value="1"/>
</dbReference>
<dbReference type="PANTHER" id="PTHR10072">
    <property type="entry name" value="IRON-SULFUR CLUSTER ASSEMBLY PROTEIN"/>
    <property type="match status" value="1"/>
</dbReference>
<dbReference type="Pfam" id="PF01521">
    <property type="entry name" value="Fe-S_biosyn"/>
    <property type="match status" value="1"/>
</dbReference>
<dbReference type="SUPFAM" id="SSF89360">
    <property type="entry name" value="HesB-like domain"/>
    <property type="match status" value="1"/>
</dbReference>
<dbReference type="PROSITE" id="PS01152">
    <property type="entry name" value="HESB"/>
    <property type="match status" value="1"/>
</dbReference>
<organism>
    <name type="scientific">Salmonella enteritidis PT4 (strain P125109)</name>
    <dbReference type="NCBI Taxonomy" id="550537"/>
    <lineage>
        <taxon>Bacteria</taxon>
        <taxon>Pseudomonadati</taxon>
        <taxon>Pseudomonadota</taxon>
        <taxon>Gammaproteobacteria</taxon>
        <taxon>Enterobacterales</taxon>
        <taxon>Enterobacteriaceae</taxon>
        <taxon>Salmonella</taxon>
    </lineage>
</organism>
<name>ISCA_SALEP</name>
<gene>
    <name evidence="1" type="primary">iscA</name>
    <name type="ordered locus">SEN2521</name>
</gene>
<accession>B5R5A0</accession>
<proteinExistence type="inferred from homology"/>
<sequence>MSITLSDSAAARVNTFLANRGKGFGLRLGVRTSGCSGMAYVLEFVDEPTAEDTVFEDKGVKVVVDGKSLQFLDGTQLDFVKEGLNEGFKFSNPNVKDECGCGESFHV</sequence>
<reference key="1">
    <citation type="journal article" date="2008" name="Genome Res.">
        <title>Comparative genome analysis of Salmonella enteritidis PT4 and Salmonella gallinarum 287/91 provides insights into evolutionary and host adaptation pathways.</title>
        <authorList>
            <person name="Thomson N.R."/>
            <person name="Clayton D.J."/>
            <person name="Windhorst D."/>
            <person name="Vernikos G."/>
            <person name="Davidson S."/>
            <person name="Churcher C."/>
            <person name="Quail M.A."/>
            <person name="Stevens M."/>
            <person name="Jones M.A."/>
            <person name="Watson M."/>
            <person name="Barron A."/>
            <person name="Layton A."/>
            <person name="Pickard D."/>
            <person name="Kingsley R.A."/>
            <person name="Bignell A."/>
            <person name="Clark L."/>
            <person name="Harris B."/>
            <person name="Ormond D."/>
            <person name="Abdellah Z."/>
            <person name="Brooks K."/>
            <person name="Cherevach I."/>
            <person name="Chillingworth T."/>
            <person name="Woodward J."/>
            <person name="Norberczak H."/>
            <person name="Lord A."/>
            <person name="Arrowsmith C."/>
            <person name="Jagels K."/>
            <person name="Moule S."/>
            <person name="Mungall K."/>
            <person name="Saunders M."/>
            <person name="Whitehead S."/>
            <person name="Chabalgoity J.A."/>
            <person name="Maskell D."/>
            <person name="Humphreys T."/>
            <person name="Roberts M."/>
            <person name="Barrow P.A."/>
            <person name="Dougan G."/>
            <person name="Parkhill J."/>
        </authorList>
    </citation>
    <scope>NUCLEOTIDE SEQUENCE [LARGE SCALE GENOMIC DNA]</scope>
    <source>
        <strain>P125109</strain>
    </source>
</reference>
<comment type="function">
    <text evidence="1">Is able to transfer iron-sulfur clusters to apo-ferredoxin. Multiple cycles of [2Fe2S] cluster formation and transfer are observed, suggesting that IscA acts catalytically. Recruits intracellular free iron so as to provide iron for the assembly of transient iron-sulfur cluster in IscU in the presence of IscS, L-cysteine and the thioredoxin reductase system TrxA/TrxB.</text>
</comment>
<comment type="cofactor">
    <cofactor evidence="1">
        <name>Fe cation</name>
        <dbReference type="ChEBI" id="CHEBI:24875"/>
    </cofactor>
    <text evidence="1">Binds 2 iron ions per dimer. The dimer may bind additional iron ions.</text>
</comment>
<comment type="subunit">
    <text evidence="1">Homodimer; may form tetramers and higher multimers.</text>
</comment>
<comment type="similarity">
    <text evidence="1">Belongs to the HesB/IscA family.</text>
</comment>
<feature type="chain" id="PRO_1000145761" description="Iron-binding protein IscA">
    <location>
        <begin position="1"/>
        <end position="107"/>
    </location>
</feature>
<feature type="binding site" evidence="1">
    <location>
        <position position="35"/>
    </location>
    <ligand>
        <name>Fe cation</name>
        <dbReference type="ChEBI" id="CHEBI:24875"/>
    </ligand>
</feature>
<feature type="binding site" evidence="1">
    <location>
        <position position="99"/>
    </location>
    <ligand>
        <name>Fe cation</name>
        <dbReference type="ChEBI" id="CHEBI:24875"/>
    </ligand>
</feature>
<feature type="binding site" evidence="1">
    <location>
        <position position="101"/>
    </location>
    <ligand>
        <name>Fe cation</name>
        <dbReference type="ChEBI" id="CHEBI:24875"/>
    </ligand>
</feature>